<comment type="function">
    <text evidence="1">Catalyzes both the ATP-dependent activation of exogenously supplied lipoate to lipoyl-AMP and the transfer of the activated lipoyl onto the lipoyl domains of lipoate-dependent enzymes.</text>
</comment>
<comment type="catalytic activity">
    <reaction evidence="1">
        <text>L-lysyl-[lipoyl-carrier protein] + (R)-lipoate + ATP = N(6)-[(R)-lipoyl]-L-lysyl-[lipoyl-carrier protein] + AMP + diphosphate + H(+)</text>
        <dbReference type="Rhea" id="RHEA:49288"/>
        <dbReference type="Rhea" id="RHEA-COMP:10500"/>
        <dbReference type="Rhea" id="RHEA-COMP:10502"/>
        <dbReference type="ChEBI" id="CHEBI:15378"/>
        <dbReference type="ChEBI" id="CHEBI:29969"/>
        <dbReference type="ChEBI" id="CHEBI:30616"/>
        <dbReference type="ChEBI" id="CHEBI:33019"/>
        <dbReference type="ChEBI" id="CHEBI:83088"/>
        <dbReference type="ChEBI" id="CHEBI:83099"/>
        <dbReference type="ChEBI" id="CHEBI:456215"/>
        <dbReference type="EC" id="6.3.1.20"/>
    </reaction>
</comment>
<comment type="pathway">
    <text evidence="1">Protein modification; protein lipoylation via exogenous pathway; protein N(6)-(lipoyl)lysine from lipoate: step 1/2.</text>
</comment>
<comment type="pathway">
    <text evidence="1">Protein modification; protein lipoylation via exogenous pathway; protein N(6)-(lipoyl)lysine from lipoate: step 2/2.</text>
</comment>
<comment type="subunit">
    <text evidence="1">Monomer.</text>
</comment>
<comment type="subcellular location">
    <subcellularLocation>
        <location evidence="1">Cytoplasm</location>
    </subcellularLocation>
</comment>
<comment type="miscellaneous">
    <text evidence="1">In the transfer reaction, the free carboxyl group of lipoic acid is attached via an amide linkage to the epsilon-amino group of a specific lysine residue of lipoyl domains of lipoate-dependent enzymes.</text>
</comment>
<comment type="similarity">
    <text evidence="1">Belongs to the LplA family.</text>
</comment>
<dbReference type="EC" id="6.3.1.20" evidence="1"/>
<dbReference type="EMBL" id="CP000653">
    <property type="protein sequence ID" value="ABP59232.1"/>
    <property type="molecule type" value="Genomic_DNA"/>
</dbReference>
<dbReference type="RefSeq" id="WP_012015955.1">
    <property type="nucleotide sequence ID" value="NC_009436.1"/>
</dbReference>
<dbReference type="SMR" id="A4W6A2"/>
<dbReference type="STRING" id="399742.Ent638_0545"/>
<dbReference type="KEGG" id="ent:Ent638_0545"/>
<dbReference type="eggNOG" id="COG0095">
    <property type="taxonomic scope" value="Bacteria"/>
</dbReference>
<dbReference type="HOGENOM" id="CLU_022986_0_1_6"/>
<dbReference type="OrthoDB" id="9787898at2"/>
<dbReference type="UniPathway" id="UPA00537">
    <property type="reaction ID" value="UER00594"/>
</dbReference>
<dbReference type="UniPathway" id="UPA00537">
    <property type="reaction ID" value="UER00595"/>
</dbReference>
<dbReference type="Proteomes" id="UP000000230">
    <property type="component" value="Chromosome"/>
</dbReference>
<dbReference type="GO" id="GO:0005829">
    <property type="term" value="C:cytosol"/>
    <property type="evidence" value="ECO:0007669"/>
    <property type="project" value="TreeGrafter"/>
</dbReference>
<dbReference type="GO" id="GO:0005524">
    <property type="term" value="F:ATP binding"/>
    <property type="evidence" value="ECO:0007669"/>
    <property type="project" value="UniProtKB-KW"/>
</dbReference>
<dbReference type="GO" id="GO:0016979">
    <property type="term" value="F:lipoate-protein ligase activity"/>
    <property type="evidence" value="ECO:0007669"/>
    <property type="project" value="UniProtKB-UniRule"/>
</dbReference>
<dbReference type="GO" id="GO:0017118">
    <property type="term" value="F:lipoyltransferase activity"/>
    <property type="evidence" value="ECO:0007669"/>
    <property type="project" value="TreeGrafter"/>
</dbReference>
<dbReference type="GO" id="GO:0036211">
    <property type="term" value="P:protein modification process"/>
    <property type="evidence" value="ECO:0007669"/>
    <property type="project" value="InterPro"/>
</dbReference>
<dbReference type="CDD" id="cd16443">
    <property type="entry name" value="LplA"/>
    <property type="match status" value="1"/>
</dbReference>
<dbReference type="FunFam" id="3.30.390.50:FF:000002">
    <property type="entry name" value="Lipoate-protein ligase A"/>
    <property type="match status" value="1"/>
</dbReference>
<dbReference type="FunFam" id="3.30.930.10:FF:000024">
    <property type="entry name" value="Lipoate-protein ligase A"/>
    <property type="match status" value="1"/>
</dbReference>
<dbReference type="Gene3D" id="3.30.930.10">
    <property type="entry name" value="Bira Bifunctional Protein, Domain 2"/>
    <property type="match status" value="1"/>
</dbReference>
<dbReference type="Gene3D" id="3.30.390.50">
    <property type="entry name" value="CO dehydrogenase flavoprotein, C-terminal domain"/>
    <property type="match status" value="1"/>
</dbReference>
<dbReference type="HAMAP" id="MF_01602">
    <property type="entry name" value="LplA"/>
    <property type="match status" value="1"/>
</dbReference>
<dbReference type="InterPro" id="IPR045864">
    <property type="entry name" value="aa-tRNA-synth_II/BPL/LPL"/>
</dbReference>
<dbReference type="InterPro" id="IPR004143">
    <property type="entry name" value="BPL_LPL_catalytic"/>
</dbReference>
<dbReference type="InterPro" id="IPR023741">
    <property type="entry name" value="Lipoate_ligase_A"/>
</dbReference>
<dbReference type="InterPro" id="IPR019491">
    <property type="entry name" value="Lipoate_protein_ligase_C"/>
</dbReference>
<dbReference type="InterPro" id="IPR004562">
    <property type="entry name" value="LipoylTrfase_LipoateP_Ligase"/>
</dbReference>
<dbReference type="NCBIfam" id="TIGR00545">
    <property type="entry name" value="lipoyltrans"/>
    <property type="match status" value="1"/>
</dbReference>
<dbReference type="PANTHER" id="PTHR12561">
    <property type="entry name" value="LIPOATE-PROTEIN LIGASE"/>
    <property type="match status" value="1"/>
</dbReference>
<dbReference type="PANTHER" id="PTHR12561:SF3">
    <property type="entry name" value="LIPOYLTRANSFERASE 1, MITOCHONDRIAL"/>
    <property type="match status" value="1"/>
</dbReference>
<dbReference type="Pfam" id="PF10437">
    <property type="entry name" value="Lip_prot_lig_C"/>
    <property type="match status" value="1"/>
</dbReference>
<dbReference type="Pfam" id="PF21948">
    <property type="entry name" value="LplA-B_cat"/>
    <property type="match status" value="1"/>
</dbReference>
<dbReference type="SUPFAM" id="SSF55681">
    <property type="entry name" value="Class II aaRS and biotin synthetases"/>
    <property type="match status" value="1"/>
</dbReference>
<dbReference type="SUPFAM" id="SSF82649">
    <property type="entry name" value="SufE/NifU"/>
    <property type="match status" value="1"/>
</dbReference>
<dbReference type="PROSITE" id="PS51733">
    <property type="entry name" value="BPL_LPL_CATALYTIC"/>
    <property type="match status" value="1"/>
</dbReference>
<organism>
    <name type="scientific">Enterobacter sp. (strain 638)</name>
    <dbReference type="NCBI Taxonomy" id="399742"/>
    <lineage>
        <taxon>Bacteria</taxon>
        <taxon>Pseudomonadati</taxon>
        <taxon>Pseudomonadota</taxon>
        <taxon>Gammaproteobacteria</taxon>
        <taxon>Enterobacterales</taxon>
        <taxon>Enterobacteriaceae</taxon>
        <taxon>Enterobacter</taxon>
    </lineage>
</organism>
<accession>A4W6A2</accession>
<evidence type="ECO:0000255" key="1">
    <source>
        <dbReference type="HAMAP-Rule" id="MF_01602"/>
    </source>
</evidence>
<evidence type="ECO:0000255" key="2">
    <source>
        <dbReference type="PROSITE-ProRule" id="PRU01067"/>
    </source>
</evidence>
<reference key="1">
    <citation type="journal article" date="2010" name="PLoS Genet.">
        <title>Genome sequence of the plant growth promoting endophytic bacterium Enterobacter sp. 638.</title>
        <authorList>
            <person name="Taghavi S."/>
            <person name="van der Lelie D."/>
            <person name="Hoffman A."/>
            <person name="Zhang Y.B."/>
            <person name="Walla M.D."/>
            <person name="Vangronsveld J."/>
            <person name="Newman L."/>
            <person name="Monchy S."/>
        </authorList>
    </citation>
    <scope>NUCLEOTIDE SEQUENCE [LARGE SCALE GENOMIC DNA]</scope>
    <source>
        <strain>638</strain>
    </source>
</reference>
<gene>
    <name evidence="1" type="primary">lplA</name>
    <name type="ordered locus">Ent638_0545</name>
</gene>
<keyword id="KW-0067">ATP-binding</keyword>
<keyword id="KW-0963">Cytoplasm</keyword>
<keyword id="KW-0436">Ligase</keyword>
<keyword id="KW-0547">Nucleotide-binding</keyword>
<sequence>MTTLRLLISDSYDPWFNLAVEECIFRQMPATQRVLFLWRNADTVVIGRAQNPWKECNTRRMEEDNVRLARRSSGGGAVFHDLGNTCFTFMAGKPEYDKTISTAIVLKALNSLGVNAEASGRNDLVVKTREGDRKVSGSAYRETKDRGFHHGTLLLNADLSRLANYLNPDKKKLQAKGITSVRGRVANLVELMPGITHEQICDAIREAFFEHYSERVEAEIISPDKTPDLPNFAETFARQSSWEWNFGQAPAFSHLLDERFTWGGVELHFDVERGHITRTQVFTDSLNPAPLEALAARLQGCVYRAETLKQECDALVVDFPEQETELRELSHWIAQAVR</sequence>
<feature type="chain" id="PRO_1000069382" description="Lipoate-protein ligase A">
    <location>
        <begin position="1"/>
        <end position="338"/>
    </location>
</feature>
<feature type="domain" description="BPL/LPL catalytic" evidence="2">
    <location>
        <begin position="29"/>
        <end position="216"/>
    </location>
</feature>
<feature type="binding site" evidence="1">
    <location>
        <position position="71"/>
    </location>
    <ligand>
        <name>ATP</name>
        <dbReference type="ChEBI" id="CHEBI:30616"/>
    </ligand>
</feature>
<feature type="binding site" evidence="1">
    <location>
        <begin position="76"/>
        <end position="79"/>
    </location>
    <ligand>
        <name>ATP</name>
        <dbReference type="ChEBI" id="CHEBI:30616"/>
    </ligand>
</feature>
<feature type="binding site" evidence="1">
    <location>
        <position position="134"/>
    </location>
    <ligand>
        <name>(R)-lipoate</name>
        <dbReference type="ChEBI" id="CHEBI:83088"/>
    </ligand>
</feature>
<feature type="binding site" evidence="1">
    <location>
        <position position="134"/>
    </location>
    <ligand>
        <name>ATP</name>
        <dbReference type="ChEBI" id="CHEBI:30616"/>
    </ligand>
</feature>
<name>LPLA_ENT38</name>
<proteinExistence type="inferred from homology"/>
<protein>
    <recommendedName>
        <fullName evidence="1">Lipoate-protein ligase A</fullName>
        <ecNumber evidence="1">6.3.1.20</ecNumber>
    </recommendedName>
    <alternativeName>
        <fullName evidence="1">Lipoate--protein ligase</fullName>
    </alternativeName>
</protein>